<proteinExistence type="inferred from homology"/>
<reference key="1">
    <citation type="journal article" date="2005" name="Science">
        <title>Genome sequence of the PCE-dechlorinating bacterium Dehalococcoides ethenogenes.</title>
        <authorList>
            <person name="Seshadri R."/>
            <person name="Adrian L."/>
            <person name="Fouts D.E."/>
            <person name="Eisen J.A."/>
            <person name="Phillippy A.M."/>
            <person name="Methe B.A."/>
            <person name="Ward N.L."/>
            <person name="Nelson W.C."/>
            <person name="DeBoy R.T."/>
            <person name="Khouri H.M."/>
            <person name="Kolonay J.F."/>
            <person name="Dodson R.J."/>
            <person name="Daugherty S.C."/>
            <person name="Brinkac L.M."/>
            <person name="Sullivan S.A."/>
            <person name="Madupu R."/>
            <person name="Nelson K.E."/>
            <person name="Kang K.H."/>
            <person name="Impraim M."/>
            <person name="Tran K."/>
            <person name="Robinson J.M."/>
            <person name="Forberger H.A."/>
            <person name="Fraser C.M."/>
            <person name="Zinder S.H."/>
            <person name="Heidelberg J.F."/>
        </authorList>
    </citation>
    <scope>NUCLEOTIDE SEQUENCE [LARGE SCALE GENOMIC DNA]</scope>
    <source>
        <strain>ATCC BAA-2266 / KCTC 15142 / 195</strain>
    </source>
</reference>
<name>RL23_DEHM1</name>
<evidence type="ECO:0000255" key="1">
    <source>
        <dbReference type="HAMAP-Rule" id="MF_01369"/>
    </source>
</evidence>
<evidence type="ECO:0000305" key="2"/>
<dbReference type="EMBL" id="CP000027">
    <property type="protein sequence ID" value="AAW40189.1"/>
    <property type="molecule type" value="Genomic_DNA"/>
</dbReference>
<dbReference type="RefSeq" id="WP_010936253.1">
    <property type="nucleotide sequence ID" value="NC_002936.3"/>
</dbReference>
<dbReference type="SMR" id="Q3Z979"/>
<dbReference type="FunCoup" id="Q3Z979">
    <property type="interactions" value="298"/>
</dbReference>
<dbReference type="STRING" id="243164.DET0476"/>
<dbReference type="GeneID" id="3230153"/>
<dbReference type="KEGG" id="det:DET0476"/>
<dbReference type="eggNOG" id="COG0089">
    <property type="taxonomic scope" value="Bacteria"/>
</dbReference>
<dbReference type="HOGENOM" id="CLU_037562_3_2_0"/>
<dbReference type="InParanoid" id="Q3Z979"/>
<dbReference type="Proteomes" id="UP000008289">
    <property type="component" value="Chromosome"/>
</dbReference>
<dbReference type="GO" id="GO:1990904">
    <property type="term" value="C:ribonucleoprotein complex"/>
    <property type="evidence" value="ECO:0007669"/>
    <property type="project" value="UniProtKB-KW"/>
</dbReference>
<dbReference type="GO" id="GO:0005840">
    <property type="term" value="C:ribosome"/>
    <property type="evidence" value="ECO:0007669"/>
    <property type="project" value="UniProtKB-KW"/>
</dbReference>
<dbReference type="GO" id="GO:0019843">
    <property type="term" value="F:rRNA binding"/>
    <property type="evidence" value="ECO:0007669"/>
    <property type="project" value="UniProtKB-UniRule"/>
</dbReference>
<dbReference type="GO" id="GO:0003735">
    <property type="term" value="F:structural constituent of ribosome"/>
    <property type="evidence" value="ECO:0007669"/>
    <property type="project" value="InterPro"/>
</dbReference>
<dbReference type="GO" id="GO:0006412">
    <property type="term" value="P:translation"/>
    <property type="evidence" value="ECO:0007669"/>
    <property type="project" value="UniProtKB-UniRule"/>
</dbReference>
<dbReference type="FunFam" id="3.30.70.330:FF:000001">
    <property type="entry name" value="50S ribosomal protein L23"/>
    <property type="match status" value="1"/>
</dbReference>
<dbReference type="Gene3D" id="3.30.70.330">
    <property type="match status" value="1"/>
</dbReference>
<dbReference type="HAMAP" id="MF_01369_B">
    <property type="entry name" value="Ribosomal_uL23_B"/>
    <property type="match status" value="1"/>
</dbReference>
<dbReference type="InterPro" id="IPR012677">
    <property type="entry name" value="Nucleotide-bd_a/b_plait_sf"/>
</dbReference>
<dbReference type="InterPro" id="IPR013025">
    <property type="entry name" value="Ribosomal_uL23-like"/>
</dbReference>
<dbReference type="InterPro" id="IPR012678">
    <property type="entry name" value="Ribosomal_uL23/eL15/eS24_sf"/>
</dbReference>
<dbReference type="InterPro" id="IPR001014">
    <property type="entry name" value="Ribosomal_uL23_CS"/>
</dbReference>
<dbReference type="NCBIfam" id="NF004363">
    <property type="entry name" value="PRK05738.2-4"/>
    <property type="match status" value="1"/>
</dbReference>
<dbReference type="PANTHER" id="PTHR11620">
    <property type="entry name" value="60S RIBOSOMAL PROTEIN L23A"/>
    <property type="match status" value="1"/>
</dbReference>
<dbReference type="Pfam" id="PF00276">
    <property type="entry name" value="Ribosomal_L23"/>
    <property type="match status" value="1"/>
</dbReference>
<dbReference type="SUPFAM" id="SSF54189">
    <property type="entry name" value="Ribosomal proteins S24e, L23 and L15e"/>
    <property type="match status" value="1"/>
</dbReference>
<dbReference type="PROSITE" id="PS00050">
    <property type="entry name" value="RIBOSOMAL_L23"/>
    <property type="match status" value="1"/>
</dbReference>
<gene>
    <name evidence="1" type="primary">rplW</name>
    <name type="ordered locus">DET0476</name>
</gene>
<sequence length="94" mass="10641">MNLYEVLRRPLISEKNSVQAVQNKYVFEIAKGANKRMVKLAVEQAFNVTVEDVNMLHIPGKQKRMGRNLVQTAGLRKAIITLKEGDKITLFEGV</sequence>
<comment type="function">
    <text evidence="1">One of the early assembly proteins it binds 23S rRNA. One of the proteins that surrounds the polypeptide exit tunnel on the outside of the ribosome. Forms the main docking site for trigger factor binding to the ribosome.</text>
</comment>
<comment type="subunit">
    <text evidence="1">Part of the 50S ribosomal subunit. Contacts protein L29, and trigger factor when it is bound to the ribosome.</text>
</comment>
<comment type="similarity">
    <text evidence="1">Belongs to the universal ribosomal protein uL23 family.</text>
</comment>
<protein>
    <recommendedName>
        <fullName evidence="1">Large ribosomal subunit protein uL23</fullName>
    </recommendedName>
    <alternativeName>
        <fullName evidence="2">50S ribosomal protein L23</fullName>
    </alternativeName>
</protein>
<accession>Q3Z979</accession>
<feature type="chain" id="PRO_1000068073" description="Large ribosomal subunit protein uL23">
    <location>
        <begin position="1"/>
        <end position="94"/>
    </location>
</feature>
<organism>
    <name type="scientific">Dehalococcoides mccartyi (strain ATCC BAA-2266 / KCTC 15142 / 195)</name>
    <name type="common">Dehalococcoides ethenogenes (strain 195)</name>
    <dbReference type="NCBI Taxonomy" id="243164"/>
    <lineage>
        <taxon>Bacteria</taxon>
        <taxon>Bacillati</taxon>
        <taxon>Chloroflexota</taxon>
        <taxon>Dehalococcoidia</taxon>
        <taxon>Dehalococcoidales</taxon>
        <taxon>Dehalococcoidaceae</taxon>
        <taxon>Dehalococcoides</taxon>
    </lineage>
</organism>
<keyword id="KW-0687">Ribonucleoprotein</keyword>
<keyword id="KW-0689">Ribosomal protein</keyword>
<keyword id="KW-0694">RNA-binding</keyword>
<keyword id="KW-0699">rRNA-binding</keyword>